<accession>Q28VZ6</accession>
<proteinExistence type="inferred from homology"/>
<gene>
    <name evidence="1" type="primary">mnmE</name>
    <name evidence="1" type="synonym">trmE</name>
    <name type="ordered locus">Jann_0199</name>
</gene>
<comment type="function">
    <text evidence="1">Exhibits a very high intrinsic GTPase hydrolysis rate. Involved in the addition of a carboxymethylaminomethyl (cmnm) group at the wobble position (U34) of certain tRNAs, forming tRNA-cmnm(5)s(2)U34.</text>
</comment>
<comment type="cofactor">
    <cofactor evidence="1">
        <name>K(+)</name>
        <dbReference type="ChEBI" id="CHEBI:29103"/>
    </cofactor>
    <text evidence="1">Binds 1 potassium ion per subunit.</text>
</comment>
<comment type="subunit">
    <text evidence="1">Homodimer. Heterotetramer of two MnmE and two MnmG subunits.</text>
</comment>
<comment type="subcellular location">
    <subcellularLocation>
        <location evidence="1">Cytoplasm</location>
    </subcellularLocation>
</comment>
<comment type="similarity">
    <text evidence="1">Belongs to the TRAFAC class TrmE-Era-EngA-EngB-Septin-like GTPase superfamily. TrmE GTPase family.</text>
</comment>
<dbReference type="EC" id="3.6.-.-" evidence="1"/>
<dbReference type="EMBL" id="CP000264">
    <property type="protein sequence ID" value="ABD53116.1"/>
    <property type="molecule type" value="Genomic_DNA"/>
</dbReference>
<dbReference type="RefSeq" id="WP_011453325.1">
    <property type="nucleotide sequence ID" value="NC_007802.1"/>
</dbReference>
<dbReference type="SMR" id="Q28VZ6"/>
<dbReference type="STRING" id="290400.Jann_0199"/>
<dbReference type="KEGG" id="jan:Jann_0199"/>
<dbReference type="eggNOG" id="COG0486">
    <property type="taxonomic scope" value="Bacteria"/>
</dbReference>
<dbReference type="HOGENOM" id="CLU_019624_3_1_5"/>
<dbReference type="OrthoDB" id="9805918at2"/>
<dbReference type="Proteomes" id="UP000008326">
    <property type="component" value="Chromosome"/>
</dbReference>
<dbReference type="GO" id="GO:0005737">
    <property type="term" value="C:cytoplasm"/>
    <property type="evidence" value="ECO:0007669"/>
    <property type="project" value="UniProtKB-SubCell"/>
</dbReference>
<dbReference type="GO" id="GO:0005525">
    <property type="term" value="F:GTP binding"/>
    <property type="evidence" value="ECO:0007669"/>
    <property type="project" value="UniProtKB-UniRule"/>
</dbReference>
<dbReference type="GO" id="GO:0003924">
    <property type="term" value="F:GTPase activity"/>
    <property type="evidence" value="ECO:0007669"/>
    <property type="project" value="UniProtKB-UniRule"/>
</dbReference>
<dbReference type="GO" id="GO:0046872">
    <property type="term" value="F:metal ion binding"/>
    <property type="evidence" value="ECO:0007669"/>
    <property type="project" value="UniProtKB-KW"/>
</dbReference>
<dbReference type="GO" id="GO:0030488">
    <property type="term" value="P:tRNA methylation"/>
    <property type="evidence" value="ECO:0007669"/>
    <property type="project" value="TreeGrafter"/>
</dbReference>
<dbReference type="GO" id="GO:0002098">
    <property type="term" value="P:tRNA wobble uridine modification"/>
    <property type="evidence" value="ECO:0007669"/>
    <property type="project" value="TreeGrafter"/>
</dbReference>
<dbReference type="CDD" id="cd04164">
    <property type="entry name" value="trmE"/>
    <property type="match status" value="1"/>
</dbReference>
<dbReference type="CDD" id="cd14858">
    <property type="entry name" value="TrmE_N"/>
    <property type="match status" value="1"/>
</dbReference>
<dbReference type="Gene3D" id="3.40.50.300">
    <property type="entry name" value="P-loop containing nucleotide triphosphate hydrolases"/>
    <property type="match status" value="1"/>
</dbReference>
<dbReference type="Gene3D" id="3.30.1360.120">
    <property type="entry name" value="Probable tRNA modification gtpase trme, domain 1"/>
    <property type="match status" value="1"/>
</dbReference>
<dbReference type="Gene3D" id="1.20.120.430">
    <property type="entry name" value="tRNA modification GTPase MnmE domain 2"/>
    <property type="match status" value="1"/>
</dbReference>
<dbReference type="HAMAP" id="MF_00379">
    <property type="entry name" value="GTPase_MnmE"/>
    <property type="match status" value="1"/>
</dbReference>
<dbReference type="InterPro" id="IPR031168">
    <property type="entry name" value="G_TrmE"/>
</dbReference>
<dbReference type="InterPro" id="IPR006073">
    <property type="entry name" value="GTP-bd"/>
</dbReference>
<dbReference type="InterPro" id="IPR018948">
    <property type="entry name" value="GTP-bd_TrmE_N"/>
</dbReference>
<dbReference type="InterPro" id="IPR004520">
    <property type="entry name" value="GTPase_MnmE"/>
</dbReference>
<dbReference type="InterPro" id="IPR027368">
    <property type="entry name" value="MnmE_dom2"/>
</dbReference>
<dbReference type="InterPro" id="IPR025867">
    <property type="entry name" value="MnmE_helical"/>
</dbReference>
<dbReference type="InterPro" id="IPR027417">
    <property type="entry name" value="P-loop_NTPase"/>
</dbReference>
<dbReference type="InterPro" id="IPR005225">
    <property type="entry name" value="Small_GTP-bd"/>
</dbReference>
<dbReference type="InterPro" id="IPR027266">
    <property type="entry name" value="TrmE/GcvT_dom1"/>
</dbReference>
<dbReference type="NCBIfam" id="NF003661">
    <property type="entry name" value="PRK05291.1-3"/>
    <property type="match status" value="1"/>
</dbReference>
<dbReference type="NCBIfam" id="TIGR00231">
    <property type="entry name" value="small_GTP"/>
    <property type="match status" value="1"/>
</dbReference>
<dbReference type="PANTHER" id="PTHR42714">
    <property type="entry name" value="TRNA MODIFICATION GTPASE GTPBP3"/>
    <property type="match status" value="1"/>
</dbReference>
<dbReference type="PANTHER" id="PTHR42714:SF2">
    <property type="entry name" value="TRNA MODIFICATION GTPASE GTPBP3, MITOCHONDRIAL"/>
    <property type="match status" value="1"/>
</dbReference>
<dbReference type="Pfam" id="PF01926">
    <property type="entry name" value="MMR_HSR1"/>
    <property type="match status" value="1"/>
</dbReference>
<dbReference type="Pfam" id="PF12631">
    <property type="entry name" value="MnmE_helical"/>
    <property type="match status" value="1"/>
</dbReference>
<dbReference type="Pfam" id="PF10396">
    <property type="entry name" value="TrmE_N"/>
    <property type="match status" value="1"/>
</dbReference>
<dbReference type="SUPFAM" id="SSF103025">
    <property type="entry name" value="Folate-binding domain"/>
    <property type="match status" value="1"/>
</dbReference>
<dbReference type="SUPFAM" id="SSF52540">
    <property type="entry name" value="P-loop containing nucleoside triphosphate hydrolases"/>
    <property type="match status" value="1"/>
</dbReference>
<dbReference type="SUPFAM" id="SSF116878">
    <property type="entry name" value="TrmE connector domain"/>
    <property type="match status" value="1"/>
</dbReference>
<dbReference type="PROSITE" id="PS51709">
    <property type="entry name" value="G_TRME"/>
    <property type="match status" value="1"/>
</dbReference>
<evidence type="ECO:0000255" key="1">
    <source>
        <dbReference type="HAMAP-Rule" id="MF_00379"/>
    </source>
</evidence>
<name>MNME_JANSC</name>
<reference key="1">
    <citation type="submission" date="2006-02" db="EMBL/GenBank/DDBJ databases">
        <title>Complete sequence of chromosome of Jannaschia sp. CCS1.</title>
        <authorList>
            <consortium name="US DOE Joint Genome Institute"/>
            <person name="Copeland A."/>
            <person name="Lucas S."/>
            <person name="Lapidus A."/>
            <person name="Barry K."/>
            <person name="Detter J.C."/>
            <person name="Glavina del Rio T."/>
            <person name="Hammon N."/>
            <person name="Israni S."/>
            <person name="Pitluck S."/>
            <person name="Brettin T."/>
            <person name="Bruce D."/>
            <person name="Han C."/>
            <person name="Tapia R."/>
            <person name="Gilna P."/>
            <person name="Chertkov O."/>
            <person name="Saunders E."/>
            <person name="Schmutz J."/>
            <person name="Larimer F."/>
            <person name="Land M."/>
            <person name="Kyrpides N."/>
            <person name="Lykidis A."/>
            <person name="Moran M.A."/>
            <person name="Belas R."/>
            <person name="Ye W."/>
            <person name="Buchan A."/>
            <person name="Gonzalez J.M."/>
            <person name="Schell M.A."/>
            <person name="Richardson P."/>
        </authorList>
    </citation>
    <scope>NUCLEOTIDE SEQUENCE [LARGE SCALE GENOMIC DNA]</scope>
    <source>
        <strain>CCS1</strain>
    </source>
</reference>
<keyword id="KW-0963">Cytoplasm</keyword>
<keyword id="KW-0342">GTP-binding</keyword>
<keyword id="KW-0378">Hydrolase</keyword>
<keyword id="KW-0460">Magnesium</keyword>
<keyword id="KW-0479">Metal-binding</keyword>
<keyword id="KW-0547">Nucleotide-binding</keyword>
<keyword id="KW-0630">Potassium</keyword>
<keyword id="KW-1185">Reference proteome</keyword>
<keyword id="KW-0819">tRNA processing</keyword>
<feature type="chain" id="PRO_0000345803" description="tRNA modification GTPase MnmE">
    <location>
        <begin position="1"/>
        <end position="426"/>
    </location>
</feature>
<feature type="domain" description="TrmE-type G">
    <location>
        <begin position="213"/>
        <end position="350"/>
    </location>
</feature>
<feature type="binding site" evidence="1">
    <location>
        <position position="20"/>
    </location>
    <ligand>
        <name>(6S)-5-formyl-5,6,7,8-tetrahydrofolate</name>
        <dbReference type="ChEBI" id="CHEBI:57457"/>
    </ligand>
</feature>
<feature type="binding site" evidence="1">
    <location>
        <position position="77"/>
    </location>
    <ligand>
        <name>(6S)-5-formyl-5,6,7,8-tetrahydrofolate</name>
        <dbReference type="ChEBI" id="CHEBI:57457"/>
    </ligand>
</feature>
<feature type="binding site" evidence="1">
    <location>
        <position position="117"/>
    </location>
    <ligand>
        <name>(6S)-5-formyl-5,6,7,8-tetrahydrofolate</name>
        <dbReference type="ChEBI" id="CHEBI:57457"/>
    </ligand>
</feature>
<feature type="binding site" evidence="1">
    <location>
        <begin position="223"/>
        <end position="228"/>
    </location>
    <ligand>
        <name>GTP</name>
        <dbReference type="ChEBI" id="CHEBI:37565"/>
    </ligand>
</feature>
<feature type="binding site" evidence="1">
    <location>
        <position position="223"/>
    </location>
    <ligand>
        <name>K(+)</name>
        <dbReference type="ChEBI" id="CHEBI:29103"/>
    </ligand>
</feature>
<feature type="binding site" evidence="1">
    <location>
        <position position="227"/>
    </location>
    <ligand>
        <name>Mg(2+)</name>
        <dbReference type="ChEBI" id="CHEBI:18420"/>
    </ligand>
</feature>
<feature type="binding site" evidence="1">
    <location>
        <begin position="242"/>
        <end position="248"/>
    </location>
    <ligand>
        <name>GTP</name>
        <dbReference type="ChEBI" id="CHEBI:37565"/>
    </ligand>
</feature>
<feature type="binding site" evidence="1">
    <location>
        <position position="242"/>
    </location>
    <ligand>
        <name>K(+)</name>
        <dbReference type="ChEBI" id="CHEBI:29103"/>
    </ligand>
</feature>
<feature type="binding site" evidence="1">
    <location>
        <position position="244"/>
    </location>
    <ligand>
        <name>K(+)</name>
        <dbReference type="ChEBI" id="CHEBI:29103"/>
    </ligand>
</feature>
<feature type="binding site" evidence="1">
    <location>
        <position position="247"/>
    </location>
    <ligand>
        <name>K(+)</name>
        <dbReference type="ChEBI" id="CHEBI:29103"/>
    </ligand>
</feature>
<feature type="binding site" evidence="1">
    <location>
        <position position="248"/>
    </location>
    <ligand>
        <name>Mg(2+)</name>
        <dbReference type="ChEBI" id="CHEBI:18420"/>
    </ligand>
</feature>
<feature type="binding site" evidence="1">
    <location>
        <begin position="267"/>
        <end position="270"/>
    </location>
    <ligand>
        <name>GTP</name>
        <dbReference type="ChEBI" id="CHEBI:37565"/>
    </ligand>
</feature>
<feature type="binding site" evidence="1">
    <location>
        <position position="426"/>
    </location>
    <ligand>
        <name>(6S)-5-formyl-5,6,7,8-tetrahydrofolate</name>
        <dbReference type="ChEBI" id="CHEBI:57457"/>
    </ligand>
</feature>
<sequence length="426" mass="45517">MQTIFAQATARGKAGVAIIRISGPDAFEVGRCLLGSLPDAGRFALRDVRTPLGELLDRGLVLVFKAPASFTGEDTVELQLHGSVAVVRAVEGAIRSTGLARLADAGEFTQRALLNDMLDLTQVEGLGRLIDSETEAQRKVAQASFEGGLSDKAERWRHLMIRAAALLEASIDFVDEDVPVDVVPEVQSILMGLDTDLAKEVTGAVVAERLHDGFEVAILGAPNAGKSTLLNVLADREIAITSDVPGTTRDVIEARLDVSGLPVTFLDTAGIRDTVDVIEKIGVQRAIDRALAADVRILLEIDDWILPDVLSDTIDFRYRAKADLSDGEGISGRTGVGIDRLLTDIEGVLSEKMSAVRSAVTDRQRGGIEAARVSLDAGVTVLSGTAELELAAEHIRHAQRSLDSVIGRVDVENLLGEIFSRFCIGK</sequence>
<organism>
    <name type="scientific">Jannaschia sp. (strain CCS1)</name>
    <dbReference type="NCBI Taxonomy" id="290400"/>
    <lineage>
        <taxon>Bacteria</taxon>
        <taxon>Pseudomonadati</taxon>
        <taxon>Pseudomonadota</taxon>
        <taxon>Alphaproteobacteria</taxon>
        <taxon>Rhodobacterales</taxon>
        <taxon>Roseobacteraceae</taxon>
        <taxon>Jannaschia</taxon>
    </lineage>
</organism>
<protein>
    <recommendedName>
        <fullName evidence="1">tRNA modification GTPase MnmE</fullName>
        <ecNumber evidence="1">3.6.-.-</ecNumber>
    </recommendedName>
</protein>